<organism>
    <name type="scientific">Cavia porcellus</name>
    <name type="common">Guinea pig</name>
    <dbReference type="NCBI Taxonomy" id="10141"/>
    <lineage>
        <taxon>Eukaryota</taxon>
        <taxon>Metazoa</taxon>
        <taxon>Chordata</taxon>
        <taxon>Craniata</taxon>
        <taxon>Vertebrata</taxon>
        <taxon>Euteleostomi</taxon>
        <taxon>Mammalia</taxon>
        <taxon>Eutheria</taxon>
        <taxon>Euarchontoglires</taxon>
        <taxon>Glires</taxon>
        <taxon>Rodentia</taxon>
        <taxon>Hystricomorpha</taxon>
        <taxon>Caviidae</taxon>
        <taxon>Cavia</taxon>
    </lineage>
</organism>
<protein>
    <recommendedName>
        <fullName>Adenosine receptor A1</fullName>
    </recommendedName>
</protein>
<keyword id="KW-1003">Cell membrane</keyword>
<keyword id="KW-1015">Disulfide bond</keyword>
<keyword id="KW-0297">G-protein coupled receptor</keyword>
<keyword id="KW-0325">Glycoprotein</keyword>
<keyword id="KW-0449">Lipoprotein</keyword>
<keyword id="KW-0472">Membrane</keyword>
<keyword id="KW-0564">Palmitate</keyword>
<keyword id="KW-0675">Receptor</keyword>
<keyword id="KW-1185">Reference proteome</keyword>
<keyword id="KW-0807">Transducer</keyword>
<keyword id="KW-0812">Transmembrane</keyword>
<keyword id="KW-1133">Transmembrane helix</keyword>
<proteinExistence type="evidence at transcript level"/>
<gene>
    <name type="primary">ADORA1</name>
</gene>
<dbReference type="EMBL" id="U04279">
    <property type="protein sequence ID" value="AAB60505.1"/>
    <property type="molecule type" value="mRNA"/>
</dbReference>
<dbReference type="PIR" id="I48096">
    <property type="entry name" value="I48096"/>
</dbReference>
<dbReference type="RefSeq" id="NP_001166382.1">
    <property type="nucleotide sequence ID" value="NM_001172911.1"/>
</dbReference>
<dbReference type="RefSeq" id="XP_013013249.1">
    <property type="nucleotide sequence ID" value="XM_013157795.1"/>
</dbReference>
<dbReference type="RefSeq" id="XP_013013250.1">
    <property type="nucleotide sequence ID" value="XM_013157796.1"/>
</dbReference>
<dbReference type="RefSeq" id="XP_013013251.1">
    <property type="nucleotide sequence ID" value="XM_013157797.1"/>
</dbReference>
<dbReference type="RefSeq" id="XP_013013252.1">
    <property type="nucleotide sequence ID" value="XM_013157798.1"/>
</dbReference>
<dbReference type="SMR" id="P47745"/>
<dbReference type="DIP" id="DIP-440N"/>
<dbReference type="FunCoup" id="P47745">
    <property type="interactions" value="837"/>
</dbReference>
<dbReference type="STRING" id="10141.ENSCPOP00000029279"/>
<dbReference type="BindingDB" id="P47745"/>
<dbReference type="ChEMBL" id="CHEMBL2304404"/>
<dbReference type="DrugCentral" id="P47745"/>
<dbReference type="GlyCosmos" id="P47745">
    <property type="glycosylation" value="1 site, No reported glycans"/>
</dbReference>
<dbReference type="Ensembl" id="ENSCPOT00000045914.1">
    <property type="protein sequence ID" value="ENSCPOP00000025301.1"/>
    <property type="gene ID" value="ENSCPOG00000032582.1"/>
</dbReference>
<dbReference type="Ensembl" id="ENSCPOT00000047692.1">
    <property type="protein sequence ID" value="ENSCPOP00000029279.1"/>
    <property type="gene ID" value="ENSCPOG00000032582.1"/>
</dbReference>
<dbReference type="GeneID" id="100135472"/>
<dbReference type="KEGG" id="cpoc:100135472"/>
<dbReference type="CTD" id="134"/>
<dbReference type="VEuPathDB" id="HostDB:ENSCPOG00000032582"/>
<dbReference type="eggNOG" id="KOG3656">
    <property type="taxonomic scope" value="Eukaryota"/>
</dbReference>
<dbReference type="GeneTree" id="ENSGT01030000234555"/>
<dbReference type="HOGENOM" id="CLU_009579_11_5_1"/>
<dbReference type="InParanoid" id="P47745"/>
<dbReference type="OMA" id="FCCKDTP"/>
<dbReference type="OrthoDB" id="5984709at2759"/>
<dbReference type="TreeFam" id="TF325296"/>
<dbReference type="PRO" id="PR:P47745"/>
<dbReference type="Proteomes" id="UP000005447">
    <property type="component" value="Unassembled WGS sequence"/>
</dbReference>
<dbReference type="Bgee" id="ENSCPOG00000032582">
    <property type="expression patterns" value="Expressed in frontal cortex and 12 other cell types or tissues"/>
</dbReference>
<dbReference type="GO" id="GO:0005929">
    <property type="term" value="C:cilium"/>
    <property type="evidence" value="ECO:0007669"/>
    <property type="project" value="Ensembl"/>
</dbReference>
<dbReference type="GO" id="GO:0043197">
    <property type="term" value="C:dendritic spine"/>
    <property type="evidence" value="ECO:0007669"/>
    <property type="project" value="Ensembl"/>
</dbReference>
<dbReference type="GO" id="GO:0005886">
    <property type="term" value="C:plasma membrane"/>
    <property type="evidence" value="ECO:0007669"/>
    <property type="project" value="UniProtKB-SubCell"/>
</dbReference>
<dbReference type="GO" id="GO:0001609">
    <property type="term" value="F:G protein-coupled adenosine receptor activity"/>
    <property type="evidence" value="ECO:0007669"/>
    <property type="project" value="InterPro"/>
</dbReference>
<dbReference type="GO" id="GO:0060079">
    <property type="term" value="P:excitatory postsynaptic potential"/>
    <property type="evidence" value="ECO:0007669"/>
    <property type="project" value="Ensembl"/>
</dbReference>
<dbReference type="GO" id="GO:0050900">
    <property type="term" value="P:leukocyte migration"/>
    <property type="evidence" value="ECO:0007669"/>
    <property type="project" value="Ensembl"/>
</dbReference>
<dbReference type="GO" id="GO:0060292">
    <property type="term" value="P:long-term synaptic depression"/>
    <property type="evidence" value="ECO:0007669"/>
    <property type="project" value="Ensembl"/>
</dbReference>
<dbReference type="GO" id="GO:0070254">
    <property type="term" value="P:mucus secretion"/>
    <property type="evidence" value="ECO:0007669"/>
    <property type="project" value="Ensembl"/>
</dbReference>
<dbReference type="GO" id="GO:0050728">
    <property type="term" value="P:negative regulation of inflammatory response"/>
    <property type="evidence" value="ECO:0007669"/>
    <property type="project" value="Ensembl"/>
</dbReference>
<dbReference type="GO" id="GO:0002686">
    <property type="term" value="P:negative regulation of leukocyte migration"/>
    <property type="evidence" value="ECO:0007669"/>
    <property type="project" value="Ensembl"/>
</dbReference>
<dbReference type="GO" id="GO:1900453">
    <property type="term" value="P:negative regulation of long-term synaptic depression"/>
    <property type="evidence" value="ECO:0007669"/>
    <property type="project" value="Ensembl"/>
</dbReference>
<dbReference type="GO" id="GO:0070256">
    <property type="term" value="P:negative regulation of mucus secretion"/>
    <property type="evidence" value="ECO:0007669"/>
    <property type="project" value="Ensembl"/>
</dbReference>
<dbReference type="GO" id="GO:0003093">
    <property type="term" value="P:regulation of glomerular filtration"/>
    <property type="evidence" value="ECO:0007669"/>
    <property type="project" value="Ensembl"/>
</dbReference>
<dbReference type="GO" id="GO:0051930">
    <property type="term" value="P:regulation of sensory perception of pain"/>
    <property type="evidence" value="ECO:0007669"/>
    <property type="project" value="Ensembl"/>
</dbReference>
<dbReference type="GO" id="GO:0014074">
    <property type="term" value="P:response to purine-containing compound"/>
    <property type="evidence" value="ECO:0007669"/>
    <property type="project" value="Ensembl"/>
</dbReference>
<dbReference type="CDD" id="cd15071">
    <property type="entry name" value="7tmA_Adenosine_R_A1"/>
    <property type="match status" value="1"/>
</dbReference>
<dbReference type="FunFam" id="1.20.1070.10:FF:000061">
    <property type="entry name" value="Adenosine receptor A2"/>
    <property type="match status" value="1"/>
</dbReference>
<dbReference type="Gene3D" id="1.20.1070.10">
    <property type="entry name" value="Rhodopsin 7-helix transmembrane proteins"/>
    <property type="match status" value="1"/>
</dbReference>
<dbReference type="InterPro" id="IPR001068">
    <property type="entry name" value="Adeno_A1_rcpt"/>
</dbReference>
<dbReference type="InterPro" id="IPR001634">
    <property type="entry name" value="Adenosn_rcpt"/>
</dbReference>
<dbReference type="InterPro" id="IPR000276">
    <property type="entry name" value="GPCR_Rhodpsn"/>
</dbReference>
<dbReference type="InterPro" id="IPR017452">
    <property type="entry name" value="GPCR_Rhodpsn_7TM"/>
</dbReference>
<dbReference type="PANTHER" id="PTHR24246:SF1">
    <property type="entry name" value="ADENOSINE RECEPTOR A1"/>
    <property type="match status" value="1"/>
</dbReference>
<dbReference type="PANTHER" id="PTHR24246">
    <property type="entry name" value="OLFACTORY RECEPTOR AND ADENOSINE RECEPTOR"/>
    <property type="match status" value="1"/>
</dbReference>
<dbReference type="Pfam" id="PF00001">
    <property type="entry name" value="7tm_1"/>
    <property type="match status" value="1"/>
</dbReference>
<dbReference type="PRINTS" id="PR00552">
    <property type="entry name" value="ADENOSINEA1R"/>
</dbReference>
<dbReference type="PRINTS" id="PR00424">
    <property type="entry name" value="ADENOSINER"/>
</dbReference>
<dbReference type="PRINTS" id="PR00237">
    <property type="entry name" value="GPCRRHODOPSN"/>
</dbReference>
<dbReference type="SMART" id="SM01381">
    <property type="entry name" value="7TM_GPCR_Srsx"/>
    <property type="match status" value="1"/>
</dbReference>
<dbReference type="SUPFAM" id="SSF81321">
    <property type="entry name" value="Family A G protein-coupled receptor-like"/>
    <property type="match status" value="1"/>
</dbReference>
<dbReference type="PROSITE" id="PS00237">
    <property type="entry name" value="G_PROTEIN_RECEP_F1_1"/>
    <property type="match status" value="1"/>
</dbReference>
<dbReference type="PROSITE" id="PS50262">
    <property type="entry name" value="G_PROTEIN_RECEP_F1_2"/>
    <property type="match status" value="1"/>
</dbReference>
<accession>P47745</accession>
<evidence type="ECO:0000255" key="1"/>
<evidence type="ECO:0000255" key="2">
    <source>
        <dbReference type="PROSITE-ProRule" id="PRU00521"/>
    </source>
</evidence>
<reference key="1">
    <citation type="journal article" date="1994" name="Brain Res. Mol. Brain Res.">
        <title>Cloning and characterization of a pharmacologically distinct A1 adenosine receptor from guinea pig brain.</title>
        <authorList>
            <person name="Meng F."/>
            <person name="Xie G.X."/>
            <person name="Chalmers D."/>
            <person name="Morgan C."/>
            <person name="Watson S.J. Jr."/>
            <person name="Akil H."/>
        </authorList>
    </citation>
    <scope>NUCLEOTIDE SEQUENCE [MRNA]</scope>
    <source>
        <strain>Hartley</strain>
        <tissue>Brain</tissue>
    </source>
</reference>
<comment type="function">
    <text>Receptor for adenosine. The activity of this receptor is mediated by G proteins which inhibit adenylyl cyclase.</text>
</comment>
<comment type="subcellular location">
    <subcellularLocation>
        <location>Cell membrane</location>
        <topology>Multi-pass membrane protein</topology>
    </subcellularLocation>
</comment>
<comment type="similarity">
    <text evidence="2">Belongs to the G-protein coupled receptor 1 family.</text>
</comment>
<feature type="chain" id="PRO_0000068990" description="Adenosine receptor A1">
    <location>
        <begin position="1"/>
        <end position="326"/>
    </location>
</feature>
<feature type="topological domain" description="Extracellular" evidence="1">
    <location>
        <begin position="1"/>
        <end position="10"/>
    </location>
</feature>
<feature type="transmembrane region" description="Helical; Name=1" evidence="1">
    <location>
        <begin position="11"/>
        <end position="33"/>
    </location>
</feature>
<feature type="topological domain" description="Cytoplasmic" evidence="1">
    <location>
        <begin position="34"/>
        <end position="46"/>
    </location>
</feature>
<feature type="transmembrane region" description="Helical; Name=2" evidence="1">
    <location>
        <begin position="47"/>
        <end position="69"/>
    </location>
</feature>
<feature type="topological domain" description="Extracellular" evidence="1">
    <location>
        <begin position="70"/>
        <end position="80"/>
    </location>
</feature>
<feature type="transmembrane region" description="Helical; Name=3" evidence="1">
    <location>
        <begin position="81"/>
        <end position="102"/>
    </location>
</feature>
<feature type="topological domain" description="Cytoplasmic" evidence="1">
    <location>
        <begin position="103"/>
        <end position="123"/>
    </location>
</feature>
<feature type="transmembrane region" description="Helical; Name=4" evidence="1">
    <location>
        <begin position="124"/>
        <end position="146"/>
    </location>
</feature>
<feature type="topological domain" description="Extracellular" evidence="1">
    <location>
        <begin position="147"/>
        <end position="176"/>
    </location>
</feature>
<feature type="transmembrane region" description="Helical; Name=5" evidence="1">
    <location>
        <begin position="177"/>
        <end position="201"/>
    </location>
</feature>
<feature type="topological domain" description="Cytoplasmic" evidence="1">
    <location>
        <begin position="202"/>
        <end position="235"/>
    </location>
</feature>
<feature type="transmembrane region" description="Helical; Name=6" evidence="1">
    <location>
        <begin position="236"/>
        <end position="259"/>
    </location>
</feature>
<feature type="topological domain" description="Extracellular" evidence="1">
    <location>
        <begin position="260"/>
        <end position="267"/>
    </location>
</feature>
<feature type="transmembrane region" description="Helical; Name=7" evidence="1">
    <location>
        <begin position="268"/>
        <end position="292"/>
    </location>
</feature>
<feature type="topological domain" description="Cytoplasmic" evidence="1">
    <location>
        <begin position="293"/>
        <end position="326"/>
    </location>
</feature>
<feature type="lipid moiety-binding region" description="S-palmitoyl cysteine" evidence="1">
    <location>
        <position position="309"/>
    </location>
</feature>
<feature type="glycosylation site" description="N-linked (GlcNAc...) asparagine" evidence="1">
    <location>
        <position position="159"/>
    </location>
</feature>
<feature type="disulfide bond" evidence="2">
    <location>
        <begin position="80"/>
        <end position="169"/>
    </location>
</feature>
<sequence length="326" mass="36493">MPHSVSAFQAAYIGIEVLIALVSVPGNVLVIWAVKVNQALRDATFCFIASLAVADVAVGALVIPLAILINIGPQTYFHTCLMVACPVLILTQSSILALLAIAVDRYLRVKIPLRYKTVVTPRRAAVAIAGCWILSLVVGLTPMFGWNNLSKIEMAWAANGSVGEPVIKCEFEKVISMEYMVYFNFFVWVLPPLLLMVLIYLEVFYLIRKQLSKKVSASSGDPQKYYGKELKIAKSLALILFLFALSWLPLHILNCITLFCPTCHKPTILTYIAIFLTHGNSAMNPIVYAFRIQKFRVTFLKIWNDHFRCQPEPPIDEDLPEEKVDD</sequence>
<name>AA1R_CAVPO</name>